<feature type="initiator methionine" description="Removed" evidence="3">
    <location>
        <position position="1"/>
    </location>
</feature>
<feature type="chain" id="PRO_0000206307" description="Vacuolar protein sorting-associated protein 33B">
    <location>
        <begin position="2"/>
        <end position="617"/>
    </location>
</feature>
<feature type="modified residue" description="N-acetylalanine" evidence="3">
    <location>
        <position position="2"/>
    </location>
</feature>
<protein>
    <recommendedName>
        <fullName>Vacuolar protein sorting-associated protein 33B</fullName>
        <shortName>r-vps33b</shortName>
    </recommendedName>
</protein>
<accession>Q63616</accession>
<evidence type="ECO:0000250" key="1"/>
<evidence type="ECO:0000250" key="2">
    <source>
        <dbReference type="UniProtKB" id="P59016"/>
    </source>
</evidence>
<evidence type="ECO:0000250" key="3">
    <source>
        <dbReference type="UniProtKB" id="Q9H267"/>
    </source>
</evidence>
<evidence type="ECO:0000305" key="4"/>
<name>VP33B_RAT</name>
<gene>
    <name type="primary">Vps33b</name>
</gene>
<organism>
    <name type="scientific">Rattus norvegicus</name>
    <name type="common">Rat</name>
    <dbReference type="NCBI Taxonomy" id="10116"/>
    <lineage>
        <taxon>Eukaryota</taxon>
        <taxon>Metazoa</taxon>
        <taxon>Chordata</taxon>
        <taxon>Craniata</taxon>
        <taxon>Vertebrata</taxon>
        <taxon>Euteleostomi</taxon>
        <taxon>Mammalia</taxon>
        <taxon>Eutheria</taxon>
        <taxon>Euarchontoglires</taxon>
        <taxon>Glires</taxon>
        <taxon>Rodentia</taxon>
        <taxon>Myomorpha</taxon>
        <taxon>Muroidea</taxon>
        <taxon>Muridae</taxon>
        <taxon>Murinae</taxon>
        <taxon>Rattus</taxon>
    </lineage>
</organism>
<dbReference type="EMBL" id="U35245">
    <property type="protein sequence ID" value="AAC52986.1"/>
    <property type="molecule type" value="mRNA"/>
</dbReference>
<dbReference type="EMBL" id="BC081707">
    <property type="protein sequence ID" value="AAH81707.1"/>
    <property type="molecule type" value="mRNA"/>
</dbReference>
<dbReference type="PIR" id="JC5721">
    <property type="entry name" value="JC5721"/>
</dbReference>
<dbReference type="RefSeq" id="NP_071622.1">
    <property type="nucleotide sequence ID" value="NM_022286.2"/>
</dbReference>
<dbReference type="SMR" id="Q63616"/>
<dbReference type="BioGRID" id="248968">
    <property type="interactions" value="1"/>
</dbReference>
<dbReference type="FunCoup" id="Q63616">
    <property type="interactions" value="3472"/>
</dbReference>
<dbReference type="STRING" id="10116.ENSRNOP00000017862"/>
<dbReference type="PhosphoSitePlus" id="Q63616"/>
<dbReference type="jPOST" id="Q63616"/>
<dbReference type="PaxDb" id="10116-ENSRNOP00000017862"/>
<dbReference type="Ensembl" id="ENSRNOT00000017862.5">
    <property type="protein sequence ID" value="ENSRNOP00000017862.4"/>
    <property type="gene ID" value="ENSRNOG00000013149.5"/>
</dbReference>
<dbReference type="GeneID" id="64060"/>
<dbReference type="KEGG" id="rno:64060"/>
<dbReference type="UCSC" id="RGD:620644">
    <property type="organism name" value="rat"/>
</dbReference>
<dbReference type="AGR" id="RGD:620644"/>
<dbReference type="CTD" id="26276"/>
<dbReference type="RGD" id="620644">
    <property type="gene designation" value="Vps33b"/>
</dbReference>
<dbReference type="eggNOG" id="KOG1302">
    <property type="taxonomic scope" value="Eukaryota"/>
</dbReference>
<dbReference type="GeneTree" id="ENSGT00940000156813"/>
<dbReference type="HOGENOM" id="CLU_016678_3_1_1"/>
<dbReference type="InParanoid" id="Q63616"/>
<dbReference type="OMA" id="QVHIYMI"/>
<dbReference type="OrthoDB" id="25116at9989"/>
<dbReference type="PhylomeDB" id="Q63616"/>
<dbReference type="TreeFam" id="TF315126"/>
<dbReference type="PRO" id="PR:Q63616"/>
<dbReference type="Proteomes" id="UP000002494">
    <property type="component" value="Chromosome 1"/>
</dbReference>
<dbReference type="Bgee" id="ENSRNOG00000013149">
    <property type="expression patterns" value="Expressed in thymus and 20 other cell types or tissues"/>
</dbReference>
<dbReference type="GO" id="GO:0030136">
    <property type="term" value="C:clathrin-coated vesicle"/>
    <property type="evidence" value="ECO:0000266"/>
    <property type="project" value="RGD"/>
</dbReference>
<dbReference type="GO" id="GO:0033263">
    <property type="term" value="C:CORVET complex"/>
    <property type="evidence" value="ECO:0000318"/>
    <property type="project" value="GO_Central"/>
</dbReference>
<dbReference type="GO" id="GO:0005737">
    <property type="term" value="C:cytoplasm"/>
    <property type="evidence" value="ECO:0000266"/>
    <property type="project" value="RGD"/>
</dbReference>
<dbReference type="GO" id="GO:0031901">
    <property type="term" value="C:early endosome membrane"/>
    <property type="evidence" value="ECO:0000266"/>
    <property type="project" value="RGD"/>
</dbReference>
<dbReference type="GO" id="GO:0005768">
    <property type="term" value="C:endosome"/>
    <property type="evidence" value="ECO:0000266"/>
    <property type="project" value="RGD"/>
</dbReference>
<dbReference type="GO" id="GO:0005794">
    <property type="term" value="C:Golgi apparatus"/>
    <property type="evidence" value="ECO:0000266"/>
    <property type="project" value="RGD"/>
</dbReference>
<dbReference type="GO" id="GO:0030897">
    <property type="term" value="C:HOPS complex"/>
    <property type="evidence" value="ECO:0000266"/>
    <property type="project" value="RGD"/>
</dbReference>
<dbReference type="GO" id="GO:0005770">
    <property type="term" value="C:late endosome"/>
    <property type="evidence" value="ECO:0000266"/>
    <property type="project" value="RGD"/>
</dbReference>
<dbReference type="GO" id="GO:0031902">
    <property type="term" value="C:late endosome membrane"/>
    <property type="evidence" value="ECO:0007669"/>
    <property type="project" value="UniProtKB-SubCell"/>
</dbReference>
<dbReference type="GO" id="GO:0005765">
    <property type="term" value="C:lysosomal membrane"/>
    <property type="evidence" value="ECO:0007669"/>
    <property type="project" value="UniProtKB-SubCell"/>
</dbReference>
<dbReference type="GO" id="GO:0005764">
    <property type="term" value="C:lysosome"/>
    <property type="evidence" value="ECO:0000266"/>
    <property type="project" value="RGD"/>
</dbReference>
<dbReference type="GO" id="GO:0048471">
    <property type="term" value="C:perinuclear region of cytoplasm"/>
    <property type="evidence" value="ECO:0000266"/>
    <property type="project" value="RGD"/>
</dbReference>
<dbReference type="GO" id="GO:0031091">
    <property type="term" value="C:platelet alpha granule"/>
    <property type="evidence" value="ECO:0000266"/>
    <property type="project" value="RGD"/>
</dbReference>
<dbReference type="GO" id="GO:0055037">
    <property type="term" value="C:recycling endosome"/>
    <property type="evidence" value="ECO:0007669"/>
    <property type="project" value="UniProtKB-SubCell"/>
</dbReference>
<dbReference type="GO" id="GO:0008021">
    <property type="term" value="C:synaptic vesicle"/>
    <property type="evidence" value="ECO:0000314"/>
    <property type="project" value="SynGO"/>
</dbReference>
<dbReference type="GO" id="GO:0099023">
    <property type="term" value="C:vesicle tethering complex"/>
    <property type="evidence" value="ECO:0000266"/>
    <property type="project" value="RGD"/>
</dbReference>
<dbReference type="GO" id="GO:0044877">
    <property type="term" value="F:protein-containing complex binding"/>
    <property type="evidence" value="ECO:0000266"/>
    <property type="project" value="RGD"/>
</dbReference>
<dbReference type="GO" id="GO:0030199">
    <property type="term" value="P:collagen fibril organization"/>
    <property type="evidence" value="ECO:0000266"/>
    <property type="project" value="RGD"/>
</dbReference>
<dbReference type="GO" id="GO:0032963">
    <property type="term" value="P:collagen metabolic process"/>
    <property type="evidence" value="ECO:0000266"/>
    <property type="project" value="RGD"/>
</dbReference>
<dbReference type="GO" id="GO:0007032">
    <property type="term" value="P:endosome organization"/>
    <property type="evidence" value="ECO:0000266"/>
    <property type="project" value="RGD"/>
</dbReference>
<dbReference type="GO" id="GO:0006886">
    <property type="term" value="P:intracellular protein transport"/>
    <property type="evidence" value="ECO:0000266"/>
    <property type="project" value="RGD"/>
</dbReference>
<dbReference type="GO" id="GO:0032418">
    <property type="term" value="P:lysosome localization"/>
    <property type="evidence" value="ECO:0000266"/>
    <property type="project" value="RGD"/>
</dbReference>
<dbReference type="GO" id="GO:0035855">
    <property type="term" value="P:megakaryocyte development"/>
    <property type="evidence" value="ECO:0000266"/>
    <property type="project" value="RGD"/>
</dbReference>
<dbReference type="GO" id="GO:0032400">
    <property type="term" value="P:melanosome localization"/>
    <property type="evidence" value="ECO:0000266"/>
    <property type="project" value="RGD"/>
</dbReference>
<dbReference type="GO" id="GO:0061025">
    <property type="term" value="P:membrane fusion"/>
    <property type="evidence" value="ECO:0000266"/>
    <property type="project" value="RGD"/>
</dbReference>
<dbReference type="GO" id="GO:0070889">
    <property type="term" value="P:platelet alpha granule organization"/>
    <property type="evidence" value="ECO:0000266"/>
    <property type="project" value="RGD"/>
</dbReference>
<dbReference type="GO" id="GO:0015031">
    <property type="term" value="P:protein transport"/>
    <property type="evidence" value="ECO:0000266"/>
    <property type="project" value="RGD"/>
</dbReference>
<dbReference type="GO" id="GO:0090330">
    <property type="term" value="P:regulation of platelet aggregation"/>
    <property type="evidence" value="ECO:0000266"/>
    <property type="project" value="RGD"/>
</dbReference>
<dbReference type="GO" id="GO:0043589">
    <property type="term" value="P:skin morphogenesis"/>
    <property type="evidence" value="ECO:0000266"/>
    <property type="project" value="RGD"/>
</dbReference>
<dbReference type="GO" id="GO:0016192">
    <property type="term" value="P:vesicle-mediated transport"/>
    <property type="evidence" value="ECO:0000266"/>
    <property type="project" value="RGD"/>
</dbReference>
<dbReference type="FunFam" id="1.25.40.850:FF:000001">
    <property type="entry name" value="vacuolar protein sorting-associated protein 33B isoform X1"/>
    <property type="match status" value="1"/>
</dbReference>
<dbReference type="FunFam" id="3.40.50.2060:FF:000005">
    <property type="entry name" value="vacuolar protein sorting-associated protein 33B isoform X1"/>
    <property type="match status" value="1"/>
</dbReference>
<dbReference type="FunFam" id="3.90.830.10:FF:000004">
    <property type="entry name" value="vacuolar protein sorting-associated protein 33B isoform X1"/>
    <property type="match status" value="1"/>
</dbReference>
<dbReference type="FunFam" id="3.40.50.1910:FF:000003">
    <property type="entry name" value="vacuolar protein sorting-associated protein 33B isoform X2"/>
    <property type="match status" value="1"/>
</dbReference>
<dbReference type="Gene3D" id="1.25.40.850">
    <property type="match status" value="1"/>
</dbReference>
<dbReference type="Gene3D" id="3.40.50.1910">
    <property type="match status" value="1"/>
</dbReference>
<dbReference type="Gene3D" id="3.40.50.2060">
    <property type="match status" value="1"/>
</dbReference>
<dbReference type="Gene3D" id="3.90.830.10">
    <property type="entry name" value="Syntaxin Binding Protein 1, Chain A, domain 2"/>
    <property type="match status" value="1"/>
</dbReference>
<dbReference type="InterPro" id="IPR043154">
    <property type="entry name" value="Sec-1-like_dom1"/>
</dbReference>
<dbReference type="InterPro" id="IPR043127">
    <property type="entry name" value="Sec-1-like_dom3a"/>
</dbReference>
<dbReference type="InterPro" id="IPR001619">
    <property type="entry name" value="Sec1-like"/>
</dbReference>
<dbReference type="InterPro" id="IPR027482">
    <property type="entry name" value="Sec1-like_dom2"/>
</dbReference>
<dbReference type="InterPro" id="IPR036045">
    <property type="entry name" value="Sec1-like_sf"/>
</dbReference>
<dbReference type="InterPro" id="IPR043155">
    <property type="entry name" value="VPS33_dom3b"/>
</dbReference>
<dbReference type="PANTHER" id="PTHR11679">
    <property type="entry name" value="VESICLE PROTEIN SORTING-ASSOCIATED"/>
    <property type="match status" value="1"/>
</dbReference>
<dbReference type="Pfam" id="PF00995">
    <property type="entry name" value="Sec1"/>
    <property type="match status" value="1"/>
</dbReference>
<dbReference type="SUPFAM" id="SSF56815">
    <property type="entry name" value="Sec1/munc18-like (SM) proteins"/>
    <property type="match status" value="1"/>
</dbReference>
<reference key="1">
    <citation type="journal article" date="1996" name="Gene">
        <title>Mammalian homologues of yeast vacuolar protein sorting (vps) genes implicated in Golgi-to-lysosome trafficking.</title>
        <authorList>
            <person name="Pevsner J."/>
            <person name="Hsu S.-C."/>
            <person name="Hyde P.S."/>
            <person name="Scheller R.H."/>
        </authorList>
    </citation>
    <scope>NUCLEOTIDE SEQUENCE [MRNA]</scope>
    <source>
        <tissue>Brain</tissue>
    </source>
</reference>
<reference key="2">
    <citation type="journal article" date="2004" name="Genome Res.">
        <title>The status, quality, and expansion of the NIH full-length cDNA project: the Mammalian Gene Collection (MGC).</title>
        <authorList>
            <consortium name="The MGC Project Team"/>
        </authorList>
    </citation>
    <scope>NUCLEOTIDE SEQUENCE [LARGE SCALE MRNA]</scope>
    <source>
        <tissue>Kidney</tissue>
    </source>
</reference>
<comment type="function">
    <text evidence="2 3">May play a role in vesicle-mediated protein trafficking to lysosomal compartments and in membrane docking/fusion reactions of late endosomes/lysosomes. Mediates phagolysosomal fusion in macrophages. Proposed to be involved in endosomal maturation implicating VIPAS39. In epithelial cells, the VPS33B:VIPAS39 complex may play a role in the apical recycling pathway and in the maintenance of the apical-basolateral polarity. Seems to be involved in the sorting of specific cargos from the trans-Golgi network to alpha-granule-destined multivesicular bodies (MVBs) promoting MVBs maturation in megakaryocytes (By similarity).</text>
</comment>
<comment type="subunit">
    <text evidence="2 3">Interacts with RAB11A and VIPAS39. Associates with adaptor protein complex 3 (AP-3), clathrin:AP-3 and clathrin:HGS complexes (By similarity).</text>
</comment>
<comment type="subcellular location">
    <subcellularLocation>
        <location evidence="3">Late endosome membrane</location>
        <topology evidence="3">Peripheral membrane protein</topology>
        <orientation evidence="3">Cytoplasmic side</orientation>
    </subcellularLocation>
    <subcellularLocation>
        <location evidence="3">Lysosome membrane</location>
        <topology evidence="3">Peripheral membrane protein</topology>
        <orientation evidence="3">Cytoplasmic side</orientation>
    </subcellularLocation>
    <subcellularLocation>
        <location evidence="3">Early endosome</location>
    </subcellularLocation>
    <subcellularLocation>
        <location evidence="3">Cytoplasmic vesicle</location>
        <location evidence="3">Clathrin-coated vesicle</location>
    </subcellularLocation>
    <subcellularLocation>
        <location evidence="3">Recycling endosome</location>
    </subcellularLocation>
    <text evidence="3">Colocalizes in clusters with VIPAS39 at cytoplasmic organelles. Colocalizes with RAB11A and VIPAS39 on recycling endosomes. Colocalizes with AP-3, clathrin, Rab5 and Rab7b.</text>
</comment>
<comment type="tissue specificity">
    <text>Ubiquitous.</text>
</comment>
<comment type="PTM">
    <text evidence="1">Phosphorylated on tyrosine residues.</text>
</comment>
<comment type="similarity">
    <text evidence="4">Belongs to the STXBP/unc-18/SEC1 family.</text>
</comment>
<keyword id="KW-0007">Acetylation</keyword>
<keyword id="KW-0968">Cytoplasmic vesicle</keyword>
<keyword id="KW-0967">Endosome</keyword>
<keyword id="KW-0458">Lysosome</keyword>
<keyword id="KW-0472">Membrane</keyword>
<keyword id="KW-0597">Phosphoprotein</keyword>
<keyword id="KW-0653">Protein transport</keyword>
<keyword id="KW-1185">Reference proteome</keyword>
<keyword id="KW-0813">Transport</keyword>
<proteinExistence type="evidence at transcript level"/>
<sequence length="617" mass="70693">MAFPHRLDAPELPDFSMLKRLARDQLIYLLEQLPGKKDLFIEADLMSPLDRIANVSILKQHEVDKLYKVENKLTLSSNEQLCFLVRPRIKTMRYIANLVNADKLAGRVRKYKIILSPQKFYACEMVLEEEGVYGDVSCDEWAFSLLPLDVDLLSMELPEFFRDYFLEGDQRWINTVAQALHLLSTLYGPFPNCYGIGRCTKMSYDLWRKLEEEEDSETKGRRPEIGHIFLLDRDVDFVTALCSQVVYEGLVDDTFRIKCGSVDFGPEVTSSDKSLKVLLNAEDKVFSEIRNEHFSNVFGFLSQKARNLQAQYDRRRGMDIKQMKNFVSQELKGLKQEHRLLSLHIGACESIMKKKTKQDFQELIKTEHALLEGFNIRESTSYIEEHIDRQVSPIESLRLMCLLSITENGLIPKDYRSLKTQYLQSYGPEHLLTFSNLRRAGLLTEQASGDTLTAVENKVSKLVTDKAAGKITDAFSSLAKRSNFRAISKKLNLIPRVDGEYDLKVPRDMAYVFSGAYVPLSCRIIEQVLDRRSWQGLDEVVRLLNCSDFAFTDMAKEDKASSESLRLILVVFLGGCTFSEISALRFLGREKGYRFIFLTTAVTNSARLMEAMSEVKS</sequence>